<name>TOP2A_CRIGR</name>
<feature type="chain" id="PRO_0000145362" description="DNA topoisomerase 2-alpha">
    <location>
        <begin position="1"/>
        <end position="1526"/>
    </location>
</feature>
<feature type="domain" description="Toprim" evidence="5">
    <location>
        <begin position="454"/>
        <end position="571"/>
    </location>
</feature>
<feature type="domain" description="Topo IIA-type catalytic" evidence="6">
    <location>
        <begin position="714"/>
        <end position="1166"/>
    </location>
</feature>
<feature type="region of interest" description="Disordered" evidence="7">
    <location>
        <begin position="1"/>
        <end position="21"/>
    </location>
</feature>
<feature type="region of interest" description="Interaction with DNA" evidence="2">
    <location>
        <begin position="341"/>
        <end position="343"/>
    </location>
</feature>
<feature type="region of interest" description="Interaction with DNA" evidence="2">
    <location>
        <begin position="989"/>
        <end position="998"/>
    </location>
</feature>
<feature type="region of interest" description="Disordered" evidence="7">
    <location>
        <begin position="1089"/>
        <end position="1117"/>
    </location>
</feature>
<feature type="region of interest" description="Disordered" evidence="7">
    <location>
        <begin position="1180"/>
        <end position="1217"/>
    </location>
</feature>
<feature type="region of interest" description="Disordered" evidence="7">
    <location>
        <begin position="1233"/>
        <end position="1526"/>
    </location>
</feature>
<feature type="region of interest" description="Interaction with PLSCR1" evidence="2">
    <location>
        <begin position="1428"/>
        <end position="1434"/>
    </location>
</feature>
<feature type="compositionally biased region" description="Acidic residues" evidence="7">
    <location>
        <begin position="1098"/>
        <end position="1109"/>
    </location>
</feature>
<feature type="compositionally biased region" description="Basic and acidic residues" evidence="7">
    <location>
        <begin position="1255"/>
        <end position="1265"/>
    </location>
</feature>
<feature type="compositionally biased region" description="Acidic residues" evidence="7">
    <location>
        <begin position="1325"/>
        <end position="1344"/>
    </location>
</feature>
<feature type="compositionally biased region" description="Low complexity" evidence="7">
    <location>
        <begin position="1405"/>
        <end position="1426"/>
    </location>
</feature>
<feature type="compositionally biased region" description="Basic and acidic residues" evidence="7">
    <location>
        <begin position="1486"/>
        <end position="1497"/>
    </location>
</feature>
<feature type="active site" description="O-(5'-phospho-DNA)-tyrosine intermediate" evidence="6">
    <location>
        <position position="804"/>
    </location>
</feature>
<feature type="binding site" evidence="2">
    <location>
        <position position="90"/>
    </location>
    <ligand>
        <name>ATP</name>
        <dbReference type="ChEBI" id="CHEBI:30616"/>
    </ligand>
</feature>
<feature type="binding site" evidence="2">
    <location>
        <position position="119"/>
    </location>
    <ligand>
        <name>ATP</name>
        <dbReference type="ChEBI" id="CHEBI:30616"/>
    </ligand>
</feature>
<feature type="binding site" evidence="2">
    <location>
        <begin position="147"/>
        <end position="149"/>
    </location>
    <ligand>
        <name>ATP</name>
        <dbReference type="ChEBI" id="CHEBI:30616"/>
    </ligand>
</feature>
<feature type="binding site" evidence="2">
    <location>
        <begin position="160"/>
        <end position="167"/>
    </location>
    <ligand>
        <name>ATP</name>
        <dbReference type="ChEBI" id="CHEBI:30616"/>
    </ligand>
</feature>
<feature type="binding site" evidence="2">
    <location>
        <begin position="375"/>
        <end position="377"/>
    </location>
    <ligand>
        <name>ATP</name>
        <dbReference type="ChEBI" id="CHEBI:30616"/>
    </ligand>
</feature>
<feature type="binding site" evidence="5">
    <location>
        <position position="460"/>
    </location>
    <ligand>
        <name>Mg(2+)</name>
        <dbReference type="ChEBI" id="CHEBI:18420"/>
        <label>1</label>
        <note>catalytic</note>
    </ligand>
</feature>
<feature type="binding site" evidence="5">
    <location>
        <position position="540"/>
    </location>
    <ligand>
        <name>Mg(2+)</name>
        <dbReference type="ChEBI" id="CHEBI:18420"/>
        <label>1</label>
        <note>catalytic</note>
    </ligand>
</feature>
<feature type="binding site" evidence="5">
    <location>
        <position position="540"/>
    </location>
    <ligand>
        <name>Mg(2+)</name>
        <dbReference type="ChEBI" id="CHEBI:18420"/>
        <label>2</label>
    </ligand>
</feature>
<feature type="binding site" evidence="5">
    <location>
        <position position="542"/>
    </location>
    <ligand>
        <name>Mg(2+)</name>
        <dbReference type="ChEBI" id="CHEBI:18420"/>
        <label>2</label>
    </ligand>
</feature>
<feature type="site" description="Interaction with DNA" evidence="5">
    <location>
        <position position="488"/>
    </location>
</feature>
<feature type="site" description="Interaction with DNA" evidence="5">
    <location>
        <position position="491"/>
    </location>
</feature>
<feature type="site" description="Interaction with DNA" evidence="5">
    <location>
        <position position="660"/>
    </location>
</feature>
<feature type="site" description="Interaction with DNA" evidence="5">
    <location>
        <position position="661"/>
    </location>
</feature>
<feature type="site" description="Interaction with DNA" evidence="5">
    <location>
        <position position="722"/>
    </location>
</feature>
<feature type="site" description="Interaction with DNA" evidence="5">
    <location>
        <position position="756"/>
    </location>
</feature>
<feature type="site" description="Interaction with DNA" evidence="5">
    <location>
        <position position="762"/>
    </location>
</feature>
<feature type="site" description="Transition state stabilizer" evidence="1">
    <location>
        <position position="803"/>
    </location>
</feature>
<feature type="site" description="Important for DNA bending; intercalates between base pairs of target DNA" evidence="1">
    <location>
        <position position="855"/>
    </location>
</feature>
<feature type="site" description="Interaction with DNA" evidence="5">
    <location>
        <position position="930"/>
    </location>
</feature>
<feature type="modified residue" description="N-acetylmethionine" evidence="2">
    <location>
        <position position="1"/>
    </location>
</feature>
<feature type="modified residue" description="Phosphoserine" evidence="2">
    <location>
        <position position="4"/>
    </location>
</feature>
<feature type="modified residue" description="Phosphothreonine" evidence="2">
    <location>
        <position position="281"/>
    </location>
</feature>
<feature type="modified residue" description="Phosphoserine; by CK1" evidence="2">
    <location>
        <position position="1105"/>
    </location>
</feature>
<feature type="modified residue" description="Phosphoserine" evidence="2">
    <location>
        <position position="1208"/>
    </location>
</feature>
<feature type="modified residue" description="Phosphothreonine" evidence="4">
    <location>
        <position position="1242"/>
    </location>
</feature>
<feature type="modified residue" description="Phosphoserine" evidence="2">
    <location>
        <position position="1290"/>
    </location>
</feature>
<feature type="modified residue" description="Phosphoserine" evidence="2">
    <location>
        <position position="1292"/>
    </location>
</feature>
<feature type="modified residue" description="Phosphoserine" evidence="2">
    <location>
        <position position="1294"/>
    </location>
</feature>
<feature type="modified residue" description="Phosphoserine" evidence="2">
    <location>
        <position position="1297"/>
    </location>
</feature>
<feature type="modified residue" description="Phosphothreonine" evidence="4">
    <location>
        <position position="1322"/>
    </location>
</feature>
<feature type="modified residue" description="Phosphoserine" evidence="2">
    <location>
        <position position="1327"/>
    </location>
</feature>
<feature type="modified residue" description="Phosphoserine" evidence="2">
    <location>
        <position position="1332"/>
    </location>
</feature>
<feature type="modified residue" description="Phosphothreonine" evidence="4">
    <location>
        <position position="1349"/>
    </location>
</feature>
<feature type="modified residue" description="Phosphoserine" evidence="2">
    <location>
        <position position="1369"/>
    </location>
</feature>
<feature type="modified residue" description="Phosphoserine" evidence="2">
    <location>
        <position position="1372"/>
    </location>
</feature>
<feature type="modified residue" description="Phosphoserine" evidence="2">
    <location>
        <position position="1382"/>
    </location>
</feature>
<feature type="modified residue" description="Phosphoserine" evidence="2">
    <location>
        <position position="1386"/>
    </location>
</feature>
<feature type="modified residue" description="N6-acetyllysine; alternate" evidence="4">
    <location>
        <position position="1417"/>
    </location>
</feature>
<feature type="modified residue" description="N6-acetyllysine; alternate" evidence="4">
    <location>
        <position position="1437"/>
    </location>
</feature>
<feature type="modified residue" description="Phosphoserine" evidence="2">
    <location>
        <position position="1464"/>
    </location>
</feature>
<feature type="modified residue" description="Phosphoserine" evidence="2">
    <location>
        <position position="1466"/>
    </location>
</feature>
<feature type="modified residue" description="Phosphoserine" evidence="2">
    <location>
        <position position="1469"/>
    </location>
</feature>
<feature type="modified residue" description="Phosphoserine" evidence="2">
    <location>
        <position position="1471"/>
    </location>
</feature>
<feature type="modified residue" description="Phosphoserine" evidence="2">
    <location>
        <position position="1520"/>
    </location>
</feature>
<feature type="cross-link" description="Glycyl lysine isopeptide (Lys-Gly) (interchain with G-Cter in SUMO2)" evidence="2">
    <location>
        <position position="17"/>
    </location>
</feature>
<feature type="cross-link" description="Glycyl lysine isopeptide (Lys-Gly) (interchain with G-Cter in SUMO2)" evidence="2">
    <location>
        <position position="155"/>
    </location>
</feature>
<feature type="cross-link" description="Glycyl lysine isopeptide (Lys-Gly) (interchain with G-Cter in SUMO2)" evidence="2">
    <location>
        <position position="156"/>
    </location>
</feature>
<feature type="cross-link" description="Glycyl lysine isopeptide (Lys-Gly) (interchain with G-Cter in SUMO2)" evidence="2">
    <location>
        <position position="260"/>
    </location>
</feature>
<feature type="cross-link" description="Glycyl lysine isopeptide (Lys-Gly) (interchain with G-Cter in SUMO2)" evidence="2">
    <location>
        <position position="351"/>
    </location>
</feature>
<feature type="cross-link" description="Glycyl lysine isopeptide (Lys-Gly) (interchain with G-Cter in SUMO2)" evidence="2">
    <location>
        <position position="385"/>
    </location>
</feature>
<feature type="cross-link" description="Glycyl lysine isopeptide (Lys-Gly) (interchain with G-Cter in SUMO2)" evidence="2">
    <location>
        <position position="396"/>
    </location>
</feature>
<feature type="cross-link" description="Glycyl lysine isopeptide (Lys-Gly) (interchain with G-Cter in SUMO2)" evidence="2">
    <location>
        <position position="415"/>
    </location>
</feature>
<feature type="cross-link" description="Glycyl lysine isopeptide (Lys-Gly) (interchain with G-Cter in SUMO2)" evidence="2">
    <location>
        <position position="417"/>
    </location>
</feature>
<feature type="cross-link" description="Glycyl lysine isopeptide (Lys-Gly) (interchain with G-Cter in SUMO2)" evidence="2">
    <location>
        <position position="424"/>
    </location>
</feature>
<feature type="cross-link" description="Glycyl lysine isopeptide (Lys-Gly) (interchain with G-Cter in SUMO2)" evidence="2">
    <location>
        <position position="439"/>
    </location>
</feature>
<feature type="cross-link" description="Glycyl lysine isopeptide (Lys-Gly) (interchain with G-Cter in SUMO2)" evidence="2">
    <location>
        <position position="465"/>
    </location>
</feature>
<feature type="cross-link" description="Glycyl lysine isopeptide (Lys-Gly) (interchain with G-Cter in SUMO2)" evidence="2">
    <location>
        <position position="479"/>
    </location>
</feature>
<feature type="cross-link" description="Glycyl lysine isopeptide (Lys-Gly) (interchain with G-Cter in SUMO2)" evidence="2">
    <location>
        <position position="528"/>
    </location>
</feature>
<feature type="cross-link" description="Glycyl lysine isopeptide (Lys-Gly) (interchain with G-Cter in SUMO2)" evidence="2">
    <location>
        <position position="583"/>
    </location>
</feature>
<feature type="cross-link" description="Glycyl lysine isopeptide (Lys-Gly) (interchain with G-Cter in SUMO2)" evidence="2">
    <location>
        <position position="598"/>
    </location>
</feature>
<feature type="cross-link" description="Glycyl lysine isopeptide (Lys-Gly) (interchain with G-Cter in SUMO2)" evidence="2">
    <location>
        <position position="613"/>
    </location>
</feature>
<feature type="cross-link" description="Glycyl lysine isopeptide (Lys-Gly) (interchain with G-Cter in SUMO2)" evidence="2">
    <location>
        <position position="621"/>
    </location>
</feature>
<feature type="cross-link" description="Glycyl lysine isopeptide (Lys-Gly) (interchain with G-Cter in SUMO2)" evidence="2">
    <location>
        <position position="624"/>
    </location>
</feature>
<feature type="cross-link" description="Glycyl lysine isopeptide (Lys-Gly) (interchain with G-Cter in SUMO2)" evidence="2">
    <location>
        <position position="631"/>
    </location>
</feature>
<feature type="cross-link" description="Glycyl lysine isopeptide (Lys-Gly) (interchain with G-Cter in SUMO2)" evidence="2">
    <location>
        <position position="638"/>
    </location>
</feature>
<feature type="cross-link" description="Glycyl lysine isopeptide (Lys-Gly) (interchain with G-Cter in SUMO2)" evidence="2">
    <location>
        <position position="654"/>
    </location>
</feature>
<feature type="cross-link" description="Glycyl lysine isopeptide (Lys-Gly) (interchain with G-Cter in SUMO2)" evidence="2">
    <location>
        <position position="661"/>
    </location>
</feature>
<feature type="cross-link" description="Glycyl lysine isopeptide (Lys-Gly) (interchain with G-Cter in SUMO2)" evidence="2">
    <location>
        <position position="675"/>
    </location>
</feature>
<feature type="cross-link" description="Glycyl lysine isopeptide (Lys-Gly) (interchain with G-Cter in SUMO2)" evidence="2">
    <location>
        <position position="1074"/>
    </location>
</feature>
<feature type="cross-link" description="Glycyl lysine isopeptide (Lys-Gly) (interchain with G-Cter in SUMO2)" evidence="2">
    <location>
        <position position="1191"/>
    </location>
</feature>
<feature type="cross-link" description="Glycyl lysine isopeptide (Lys-Gly) (interchain with G-Cter in SUMO2)" evidence="2">
    <location>
        <position position="1199"/>
    </location>
</feature>
<feature type="cross-link" description="Glycyl lysine isopeptide (Lys-Gly) (interchain with G-Cter in SUMO2)" evidence="2">
    <location>
        <position position="1223"/>
    </location>
</feature>
<feature type="cross-link" description="Glycyl lysine isopeptide (Lys-Gly) (interchain with G-Cter in SUMO1); alternate" evidence="2">
    <location>
        <position position="1235"/>
    </location>
</feature>
<feature type="cross-link" description="Glycyl lysine isopeptide (Lys-Gly) (interchain with G-Cter in SUMO2); alternate" evidence="2">
    <location>
        <position position="1235"/>
    </location>
</feature>
<feature type="cross-link" description="Glycyl lysine isopeptide (Lys-Gly) (interchain with G-Cter in SUMO2)" evidence="2">
    <location>
        <position position="1254"/>
    </location>
</feature>
<feature type="cross-link" description="Glycyl lysine isopeptide (Lys-Gly) (interchain with G-Cter in SUMO2)" evidence="2">
    <location>
        <position position="1271"/>
    </location>
</feature>
<feature type="cross-link" description="Glycyl lysine isopeptide (Lys-Gly) (interchain with G-Cter in SUMO2)" evidence="2">
    <location>
        <position position="1278"/>
    </location>
</feature>
<feature type="cross-link" description="Glycyl lysine isopeptide (Lys-Gly) (interchain with G-Cter in SUMO2)" evidence="2">
    <location>
        <position position="1281"/>
    </location>
</feature>
<feature type="cross-link" description="Glycyl lysine isopeptide (Lys-Gly) (interchain with G-Cter in SUMO2)" evidence="2">
    <location>
        <position position="1358"/>
    </location>
</feature>
<feature type="cross-link" description="Glycyl lysine isopeptide (Lys-Gly) (interchain with G-Cter in SUMO2)" evidence="2">
    <location>
        <position position="1362"/>
    </location>
</feature>
<feature type="cross-link" description="Glycyl lysine isopeptide (Lys-Gly) (interchain with G-Cter in SUMO2)" evidence="2">
    <location>
        <position position="1368"/>
    </location>
</feature>
<feature type="cross-link" description="Glycyl lysine isopeptide (Lys-Gly) (interchain with G-Cter in SUMO2)" evidence="2">
    <location>
        <position position="1380"/>
    </location>
</feature>
<feature type="cross-link" description="Glycyl lysine isopeptide (Lys-Gly) (interchain with G-Cter in SUMO2); alternate" evidence="2">
    <location>
        <position position="1417"/>
    </location>
</feature>
<feature type="cross-link" description="Glycyl lysine isopeptide (Lys-Gly) (interchain with G-Cter in SUMO2); alternate" evidence="2">
    <location>
        <position position="1437"/>
    </location>
</feature>
<feature type="cross-link" description="Glycyl lysine isopeptide (Lys-Gly) (interchain with G-Cter in SUMO2)" evidence="2">
    <location>
        <position position="1449"/>
    </location>
</feature>
<feature type="cross-link" description="Glycyl lysine isopeptide (Lys-Gly) (interchain with G-Cter in SUMO2)" evidence="2">
    <location>
        <position position="1454"/>
    </location>
</feature>
<feature type="cross-link" description="Glycyl lysine isopeptide (Lys-Gly) (interchain with G-Cter in SUMO2)" evidence="2">
    <location>
        <position position="1479"/>
    </location>
</feature>
<feature type="cross-link" description="Glycyl lysine isopeptide (Lys-Gly) (interchain with G-Cter in SUMO2)" evidence="2">
    <location>
        <position position="1487"/>
    </location>
</feature>
<feature type="sequence variant" description="In cells resistant to the antineoplastic agents VP-16 and VM-26." evidence="8">
    <original>R</original>
    <variation>Q</variation>
    <location>
        <position position="493"/>
    </location>
</feature>
<comment type="function">
    <text evidence="2 4">Key decatenating enzyme that alters DNA topology by binding to two double-stranded DNA molecules, generating a double-stranded break in one of the strands, passing the intact strand through the broken strand, and religating the broken strand (By similarity). May play a role in regulating the period length of BMAL1 transcriptional oscillation (By similarity).</text>
</comment>
<comment type="catalytic activity">
    <reaction evidence="5">
        <text>ATP-dependent breakage, passage and rejoining of double-stranded DNA.</text>
        <dbReference type="EC" id="5.6.2.2"/>
    </reaction>
</comment>
<comment type="cofactor">
    <cofactor evidence="5">
        <name>Mg(2+)</name>
        <dbReference type="ChEBI" id="CHEBI:18420"/>
    </cofactor>
    <cofactor evidence="5">
        <name>Mn(2+)</name>
        <dbReference type="ChEBI" id="CHEBI:29035"/>
    </cofactor>
    <cofactor evidence="5">
        <name>Ca(2+)</name>
        <dbReference type="ChEBI" id="CHEBI:29108"/>
    </cofactor>
    <text evidence="5">Binds two Mg(2+) per subunit. The magnesium ions form salt bridges with both the protein and the DNA. Can also accept other divalent metal cations, such as Mn(2+) or Ca(2+).</text>
</comment>
<comment type="subunit">
    <text evidence="2 3 4">Homodimer (By similarity). Interacts with COPS5 (By similarity). Interacts with RECQL5; this stimulates DNA decatenation (By similarity). Interacts with SETMAR; stimulates the topoisomerase activity (By similarity). Interacts with DHX9; this interaction occurs in a E2 enzyme UBE2I- and RNA-dependent manner, negatively regulates DHX9-mediated double-stranded DNA and RNA duplex helicase activity and stimulates TOP2A-mediated supercoiled DNA relaxation activity (By similarity). Interacts with HNRNPU (via C-terminus); this interaction protects the topoisomerase TOP2A from degradation and positively regulates the relaxation of supercoiled DNA in a RNA-dependent manner (By similarity). Interacts with MCM3AP (By similarity). Interacts with ERCC6 (By similarity). Interacts with PLSCR1 (By similarity). Interacts with GCNA; this interaction allows the resolution of topoisomerase II (TOP2A) DNA-protein cross-links (By similarity). Interacts with POL1RA/RPA1 (via dock II) and UBTF in the context of Pol I complex; may assist Pol I transcription initiation by releasing supercoils occurring during DNA unwinding. Interacts with TPRN; TPRN interacts with a number of DNA damage response proteins, is recruited to sites of DNA damage and may play a role in DNA damage repair (By similarity).</text>
</comment>
<comment type="subcellular location">
    <subcellularLocation>
        <location evidence="2">Cytoplasm</location>
    </subcellularLocation>
    <subcellularLocation>
        <location evidence="2">Nucleus</location>
        <location evidence="2">Nucleoplasm</location>
    </subcellularLocation>
    <subcellularLocation>
        <location evidence="2">Nucleus</location>
    </subcellularLocation>
    <subcellularLocation>
        <location evidence="2">Nucleus</location>
        <location evidence="2">Nucleolus</location>
    </subcellularLocation>
</comment>
<comment type="PTM">
    <text evidence="2">Phosphorylation has no effect on catalytic activity (By similarity). However, phosphorylation at Ser-1105 by CSNK1D/CK1 promotes DNA cleavable complex formation (By similarity).</text>
</comment>
<comment type="miscellaneous">
    <text>Eukaryotic topoisomerase I and II can relax both negative and positive supercoils, whereas prokaryotic enzymes relax only negative supercoils.</text>
</comment>
<comment type="similarity">
    <text evidence="9">Belongs to the type II topoisomerase family.</text>
</comment>
<reference key="1">
    <citation type="journal article" date="1993" name="J. Biol. Chem.">
        <title>Molecular cloning and identification of a point mutation in the topoisomerase II cDNA from an etoposide-resistant Chinese hamster ovary cell line.</title>
        <authorList>
            <person name="Chan V.T."/>
            <person name="Ng S.W."/>
            <person name="Eder J.P."/>
            <person name="Schnipper L.E."/>
        </authorList>
    </citation>
    <scope>NUCLEOTIDE SEQUENCE [MRNA]</scope>
    <scope>VARIANT GLN-493</scope>
</reference>
<keyword id="KW-0007">Acetylation</keyword>
<keyword id="KW-0067">ATP-binding</keyword>
<keyword id="KW-0090">Biological rhythms</keyword>
<keyword id="KW-0963">Cytoplasm</keyword>
<keyword id="KW-0238">DNA-binding</keyword>
<keyword id="KW-0413">Isomerase</keyword>
<keyword id="KW-1017">Isopeptide bond</keyword>
<keyword id="KW-0460">Magnesium</keyword>
<keyword id="KW-0479">Metal-binding</keyword>
<keyword id="KW-0547">Nucleotide-binding</keyword>
<keyword id="KW-0539">Nucleus</keyword>
<keyword id="KW-0597">Phosphoprotein</keyword>
<keyword id="KW-0799">Topoisomerase</keyword>
<keyword id="KW-0832">Ubl conjugation</keyword>
<proteinExistence type="evidence at transcript level"/>
<organism>
    <name type="scientific">Cricetulus griseus</name>
    <name type="common">Chinese hamster</name>
    <name type="synonym">Cricetulus barabensis griseus</name>
    <dbReference type="NCBI Taxonomy" id="10029"/>
    <lineage>
        <taxon>Eukaryota</taxon>
        <taxon>Metazoa</taxon>
        <taxon>Chordata</taxon>
        <taxon>Craniata</taxon>
        <taxon>Vertebrata</taxon>
        <taxon>Euteleostomi</taxon>
        <taxon>Mammalia</taxon>
        <taxon>Eutheria</taxon>
        <taxon>Euarchontoglires</taxon>
        <taxon>Glires</taxon>
        <taxon>Rodentia</taxon>
        <taxon>Myomorpha</taxon>
        <taxon>Muroidea</taxon>
        <taxon>Cricetidae</taxon>
        <taxon>Cricetinae</taxon>
        <taxon>Cricetulus</taxon>
    </lineage>
</organism>
<gene>
    <name type="primary">TOP2A</name>
    <name type="synonym">TOP-2</name>
    <name type="synonym">TOP2</name>
</gene>
<accession>P41515</accession>
<sequence length="1526" mass="173197">MELSPLQPVNENMQMNKKKNEDAKKRLSIERIYQKKTQLEHILLRPDTYIGSVELVTQQMWVYDEDVGINYREVTFVPGLYKIFDEILVNAADNKQRDPKMSCIRVTIDPENNLISIWNNGKGIPVVEHKVEKMYVPALIFGQLLTSSNYDDDEKKVTGGRNGYGAKLCNIFSTRFTVETASKEYKKMFKQTWMDNMGRAGDMELKPFNGEDYTCITFQPDLSKFKMQSLDKDIVALMVRRAYDIAGSTKDVKVFLNGNKLPVKGFRSYVDMYLKDKLDETGNALKVVHEQVNPRWEVCLTMSEKGFQQISFVNSIATSKGGRHVDYVADQIVSKLVDVVKKKNKGGVAVKAHQVKNHMWIFVNALIENPTFDSQTKENMTLQAKSFGSTCQLSEKFIKAAIGCGIVESILNWVKFKAQIQLNKKCSAVKHNRIKGIPKLDDANDAGSRNSTECTLILTEGDSAKTLAVSGLGVVGRDKYGVFPLRGKILNVREASHKQIMENAEINNIIKIVGLQYKKNYEDEDSLKTLRYGKIMIMTDQDQDGSHIKGLLINFIHHNWPSLLRHRFLEEFITPIVKVSKNKQELAFYSLPEFEEWKSSTPNHKKWKVKYYKGLGTSTSKEAKEYFADMKRHRIQFKYSGPEDDAAISLAFSKKQVDDRKEWLTHFMEDRRQRKLLGLPEDYLYGQTTTYLTYNDFINKELILFSNSDNERSIPSMVDGLKPGQRKVLFTCFKRNDKREVKVAQLAGSVAEMSSYHHGEMSLMMTIINLAQNFVGSNNLNLLQPIGQFGTRLHGGKDSASPRYIFTMLSPLTRLLFPPKDDHTLKFLYDDNQRVEPEWYIPIIPMVLINGAEGIGTGWSCKIPNFDIREVVNNIRRLLDGEEPLPMLPSYKNFKGTIEELASNQYVINGEVAILNSTTIEISELPIRTWTQTYKEQVLEPMLNGTEKTPPLITDYREYHTDTTVKFVIKMTEEKLAEAERVGLHKVFKLQTSLTCNSMVLFDHVGCLKKYDTVLDILKDFFELRLKYYGLRKEWLLGMLGAESAKLNNQARFILEKIDGKIIIENKPKKELIKVLIQRGYDSDPVKAWKEAQQKVPDEEENEESDNENSDSVAESGPTFNYLLDMPLWYLTKEKKDELCKQRNEKEQELNTLKNKSPSDLWKEDLAVFIEELEVVEAKEKQDEQVGLPGKGGKAKGKKAQMSEVLPSPHGKRVIPQVTMEMKAEAEKKIRKKIKSENVEGTPTENGLELGSLKQRIEKKQKKEPGAMTKKQTTLAFKPIKKGKKRNPWSDSESDMSSNESNVDVPPREKDPRRAATKAKFTMDLDSDEDFSGSDGKDEDEDFFPLDTTPPKTKIPQKNTKKALKPQKSAMSGDPESDEKDSVPASPGPPAADLPADTEQLKPSSKQTVAVKKTATKSQSSTSTAGTKKRAVPKGSKSDSALNAHGPEKPVPAKAKNSRKRKQSSSDDSDSDFEKVVSKVAASKKSKGENQDFRVDLDETMVPRAKSGRAKKPIKYLEESDDDDLF</sequence>
<dbReference type="EC" id="5.6.2.2" evidence="5 8"/>
<dbReference type="EMBL" id="L04607">
    <property type="protein sequence ID" value="AAA37023.1"/>
    <property type="molecule type" value="mRNA"/>
</dbReference>
<dbReference type="PIR" id="A44406">
    <property type="entry name" value="A44406"/>
</dbReference>
<dbReference type="RefSeq" id="NP_001233667.1">
    <property type="nucleotide sequence ID" value="NM_001246738.1"/>
</dbReference>
<dbReference type="SMR" id="P41515"/>
<dbReference type="PaxDb" id="10029-NP_001233667.1"/>
<dbReference type="Ensembl" id="ENSCGRT00001026641.1">
    <property type="protein sequence ID" value="ENSCGRP00001022396.1"/>
    <property type="gene ID" value="ENSCGRG00001020913.1"/>
</dbReference>
<dbReference type="GeneID" id="100689304"/>
<dbReference type="KEGG" id="cge:100689304"/>
<dbReference type="CTD" id="7153"/>
<dbReference type="eggNOG" id="KOG0355">
    <property type="taxonomic scope" value="Eukaryota"/>
</dbReference>
<dbReference type="GeneTree" id="ENSGT00940000157539"/>
<dbReference type="OMA" id="DVKPHMI"/>
<dbReference type="OrthoDB" id="276498at2759"/>
<dbReference type="Proteomes" id="UP000694386">
    <property type="component" value="Unplaced"/>
</dbReference>
<dbReference type="Proteomes" id="UP001108280">
    <property type="component" value="Chromosome 7"/>
</dbReference>
<dbReference type="GO" id="GO:0005814">
    <property type="term" value="C:centriole"/>
    <property type="evidence" value="ECO:0007669"/>
    <property type="project" value="Ensembl"/>
</dbReference>
<dbReference type="GO" id="GO:0000775">
    <property type="term" value="C:chromosome, centromeric region"/>
    <property type="evidence" value="ECO:0007669"/>
    <property type="project" value="Ensembl"/>
</dbReference>
<dbReference type="GO" id="GO:0000793">
    <property type="term" value="C:condensed chromosome"/>
    <property type="evidence" value="ECO:0007669"/>
    <property type="project" value="Ensembl"/>
</dbReference>
<dbReference type="GO" id="GO:0005737">
    <property type="term" value="C:cytoplasm"/>
    <property type="evidence" value="ECO:0000250"/>
    <property type="project" value="UniProtKB"/>
</dbReference>
<dbReference type="GO" id="GO:0009330">
    <property type="term" value="C:DNA topoisomerase type II (double strand cut, ATP-hydrolyzing) complex"/>
    <property type="evidence" value="ECO:0007669"/>
    <property type="project" value="Ensembl"/>
</dbReference>
<dbReference type="GO" id="GO:0001673">
    <property type="term" value="C:male germ cell nucleus"/>
    <property type="evidence" value="ECO:0007669"/>
    <property type="project" value="Ensembl"/>
</dbReference>
<dbReference type="GO" id="GO:0000228">
    <property type="term" value="C:nuclear chromosome"/>
    <property type="evidence" value="ECO:0007669"/>
    <property type="project" value="Ensembl"/>
</dbReference>
<dbReference type="GO" id="GO:0005730">
    <property type="term" value="C:nucleolus"/>
    <property type="evidence" value="ECO:0000250"/>
    <property type="project" value="UniProtKB"/>
</dbReference>
<dbReference type="GO" id="GO:0005654">
    <property type="term" value="C:nucleoplasm"/>
    <property type="evidence" value="ECO:0000250"/>
    <property type="project" value="UniProtKB"/>
</dbReference>
<dbReference type="GO" id="GO:0005634">
    <property type="term" value="C:nucleus"/>
    <property type="evidence" value="ECO:0000250"/>
    <property type="project" value="UniProtKB"/>
</dbReference>
<dbReference type="GO" id="GO:1990904">
    <property type="term" value="C:ribonucleoprotein complex"/>
    <property type="evidence" value="ECO:0000250"/>
    <property type="project" value="UniProtKB"/>
</dbReference>
<dbReference type="GO" id="GO:0005524">
    <property type="term" value="F:ATP binding"/>
    <property type="evidence" value="ECO:0007669"/>
    <property type="project" value="UniProtKB-KW"/>
</dbReference>
<dbReference type="GO" id="GO:0003682">
    <property type="term" value="F:chromatin binding"/>
    <property type="evidence" value="ECO:0007669"/>
    <property type="project" value="Ensembl"/>
</dbReference>
<dbReference type="GO" id="GO:0008301">
    <property type="term" value="F:DNA binding, bending"/>
    <property type="evidence" value="ECO:0000250"/>
    <property type="project" value="UniProtKB"/>
</dbReference>
<dbReference type="GO" id="GO:0003918">
    <property type="term" value="F:DNA topoisomerase type II (double strand cut, ATP-hydrolyzing) activity"/>
    <property type="evidence" value="ECO:0000250"/>
    <property type="project" value="UniProtKB"/>
</dbReference>
<dbReference type="GO" id="GO:0000287">
    <property type="term" value="F:magnesium ion binding"/>
    <property type="evidence" value="ECO:0000250"/>
    <property type="project" value="UniProtKB"/>
</dbReference>
<dbReference type="GO" id="GO:0046982">
    <property type="term" value="F:protein heterodimerization activity"/>
    <property type="evidence" value="ECO:0007669"/>
    <property type="project" value="Ensembl"/>
</dbReference>
<dbReference type="GO" id="GO:0042803">
    <property type="term" value="F:protein homodimerization activity"/>
    <property type="evidence" value="ECO:0007669"/>
    <property type="project" value="Ensembl"/>
</dbReference>
<dbReference type="GO" id="GO:0005080">
    <property type="term" value="F:protein kinase C binding"/>
    <property type="evidence" value="ECO:0007669"/>
    <property type="project" value="Ensembl"/>
</dbReference>
<dbReference type="GO" id="GO:0043130">
    <property type="term" value="F:ubiquitin binding"/>
    <property type="evidence" value="ECO:0007669"/>
    <property type="project" value="Ensembl"/>
</dbReference>
<dbReference type="GO" id="GO:0030263">
    <property type="term" value="P:apoptotic chromosome condensation"/>
    <property type="evidence" value="ECO:0007669"/>
    <property type="project" value="Ensembl"/>
</dbReference>
<dbReference type="GO" id="GO:0006325">
    <property type="term" value="P:chromatin organization"/>
    <property type="evidence" value="ECO:0007669"/>
    <property type="project" value="Ensembl"/>
</dbReference>
<dbReference type="GO" id="GO:0006974">
    <property type="term" value="P:DNA damage response"/>
    <property type="evidence" value="ECO:0007669"/>
    <property type="project" value="Ensembl"/>
</dbReference>
<dbReference type="GO" id="GO:0006265">
    <property type="term" value="P:DNA topological change"/>
    <property type="evidence" value="ECO:0000250"/>
    <property type="project" value="UniProtKB"/>
</dbReference>
<dbReference type="GO" id="GO:0040016">
    <property type="term" value="P:embryonic cleavage"/>
    <property type="evidence" value="ECO:0007669"/>
    <property type="project" value="Ensembl"/>
</dbReference>
<dbReference type="GO" id="GO:0007143">
    <property type="term" value="P:female meiotic nuclear division"/>
    <property type="evidence" value="ECO:0007669"/>
    <property type="project" value="Ensembl"/>
</dbReference>
<dbReference type="GO" id="GO:0002244">
    <property type="term" value="P:hematopoietic progenitor cell differentiation"/>
    <property type="evidence" value="ECO:0007669"/>
    <property type="project" value="Ensembl"/>
</dbReference>
<dbReference type="GO" id="GO:0043065">
    <property type="term" value="P:positive regulation of apoptotic process"/>
    <property type="evidence" value="ECO:0007669"/>
    <property type="project" value="Ensembl"/>
</dbReference>
<dbReference type="GO" id="GO:0045870">
    <property type="term" value="P:positive regulation of single stranded viral RNA replication via double stranded DNA intermediate"/>
    <property type="evidence" value="ECO:0007669"/>
    <property type="project" value="Ensembl"/>
</dbReference>
<dbReference type="GO" id="GO:0045944">
    <property type="term" value="P:positive regulation of transcription by RNA polymerase II"/>
    <property type="evidence" value="ECO:0007669"/>
    <property type="project" value="Ensembl"/>
</dbReference>
<dbReference type="GO" id="GO:0042752">
    <property type="term" value="P:regulation of circadian rhythm"/>
    <property type="evidence" value="ECO:0000250"/>
    <property type="project" value="UniProtKB"/>
</dbReference>
<dbReference type="GO" id="GO:0000712">
    <property type="term" value="P:resolution of meiotic recombination intermediates"/>
    <property type="evidence" value="ECO:0007669"/>
    <property type="project" value="TreeGrafter"/>
</dbReference>
<dbReference type="GO" id="GO:0048511">
    <property type="term" value="P:rhythmic process"/>
    <property type="evidence" value="ECO:0007669"/>
    <property type="project" value="UniProtKB-KW"/>
</dbReference>
<dbReference type="GO" id="GO:0000819">
    <property type="term" value="P:sister chromatid segregation"/>
    <property type="evidence" value="ECO:0007669"/>
    <property type="project" value="TreeGrafter"/>
</dbReference>
<dbReference type="CDD" id="cd16930">
    <property type="entry name" value="HATPase_TopII-like"/>
    <property type="match status" value="1"/>
</dbReference>
<dbReference type="CDD" id="cd00187">
    <property type="entry name" value="TOP4c"/>
    <property type="match status" value="1"/>
</dbReference>
<dbReference type="CDD" id="cd03481">
    <property type="entry name" value="TopoIIA_Trans_ScTopoIIA"/>
    <property type="match status" value="1"/>
</dbReference>
<dbReference type="CDD" id="cd03365">
    <property type="entry name" value="TOPRIM_TopoIIA"/>
    <property type="match status" value="1"/>
</dbReference>
<dbReference type="FunFam" id="1.10.268.10:FF:000002">
    <property type="entry name" value="DNA topoisomerase 2"/>
    <property type="match status" value="1"/>
</dbReference>
<dbReference type="FunFam" id="3.30.1360.40:FF:000003">
    <property type="entry name" value="DNA topoisomerase 2"/>
    <property type="match status" value="1"/>
</dbReference>
<dbReference type="FunFam" id="3.30.1490.30:FF:000001">
    <property type="entry name" value="DNA topoisomerase 2"/>
    <property type="match status" value="1"/>
</dbReference>
<dbReference type="FunFam" id="3.30.230.10:FF:000008">
    <property type="entry name" value="DNA topoisomerase 2"/>
    <property type="match status" value="1"/>
</dbReference>
<dbReference type="FunFam" id="3.30.565.10:FF:000004">
    <property type="entry name" value="DNA topoisomerase 2"/>
    <property type="match status" value="1"/>
</dbReference>
<dbReference type="FunFam" id="3.40.50.670:FF:000001">
    <property type="entry name" value="DNA topoisomerase 2"/>
    <property type="match status" value="2"/>
</dbReference>
<dbReference type="FunFam" id="3.90.199.10:FF:000002">
    <property type="entry name" value="DNA topoisomerase 2"/>
    <property type="match status" value="1"/>
</dbReference>
<dbReference type="Gene3D" id="3.30.1360.40">
    <property type="match status" value="1"/>
</dbReference>
<dbReference type="Gene3D" id="3.30.1490.30">
    <property type="match status" value="1"/>
</dbReference>
<dbReference type="Gene3D" id="3.30.230.10">
    <property type="match status" value="1"/>
</dbReference>
<dbReference type="Gene3D" id="3.40.50.670">
    <property type="match status" value="1"/>
</dbReference>
<dbReference type="Gene3D" id="3.30.565.10">
    <property type="entry name" value="Histidine kinase-like ATPase, C-terminal domain"/>
    <property type="match status" value="1"/>
</dbReference>
<dbReference type="Gene3D" id="3.90.199.10">
    <property type="entry name" value="Topoisomerase II, domain 5"/>
    <property type="match status" value="1"/>
</dbReference>
<dbReference type="Gene3D" id="1.10.268.10">
    <property type="entry name" value="Topoisomerase, domain 3"/>
    <property type="match status" value="1"/>
</dbReference>
<dbReference type="InterPro" id="IPR050634">
    <property type="entry name" value="DNA_Topoisomerase_II"/>
</dbReference>
<dbReference type="InterPro" id="IPR012542">
    <property type="entry name" value="DTHCT"/>
</dbReference>
<dbReference type="InterPro" id="IPR036890">
    <property type="entry name" value="HATPase_C_sf"/>
</dbReference>
<dbReference type="InterPro" id="IPR020568">
    <property type="entry name" value="Ribosomal_Su5_D2-typ_SF"/>
</dbReference>
<dbReference type="InterPro" id="IPR014721">
    <property type="entry name" value="Ribsml_uS5_D2-typ_fold_subgr"/>
</dbReference>
<dbReference type="InterPro" id="IPR001241">
    <property type="entry name" value="Topo_IIA"/>
</dbReference>
<dbReference type="InterPro" id="IPR013760">
    <property type="entry name" value="Topo_IIA-like_dom_sf"/>
</dbReference>
<dbReference type="InterPro" id="IPR013758">
    <property type="entry name" value="Topo_IIA_A/C_ab"/>
</dbReference>
<dbReference type="InterPro" id="IPR013757">
    <property type="entry name" value="Topo_IIA_A_a_sf"/>
</dbReference>
<dbReference type="InterPro" id="IPR013759">
    <property type="entry name" value="Topo_IIA_B_C"/>
</dbReference>
<dbReference type="InterPro" id="IPR013506">
    <property type="entry name" value="Topo_IIA_bsu_dom2"/>
</dbReference>
<dbReference type="InterPro" id="IPR002205">
    <property type="entry name" value="Topo_IIA_dom_A"/>
</dbReference>
<dbReference type="InterPro" id="IPR001154">
    <property type="entry name" value="TopoII_euk"/>
</dbReference>
<dbReference type="InterPro" id="IPR018522">
    <property type="entry name" value="TopoIIA_CS"/>
</dbReference>
<dbReference type="InterPro" id="IPR031660">
    <property type="entry name" value="TOPRIM_C"/>
</dbReference>
<dbReference type="InterPro" id="IPR006171">
    <property type="entry name" value="TOPRIM_dom"/>
</dbReference>
<dbReference type="InterPro" id="IPR034157">
    <property type="entry name" value="TOPRIM_TopoII"/>
</dbReference>
<dbReference type="PANTHER" id="PTHR10169:SF61">
    <property type="entry name" value="DNA TOPOISOMERASE 2-ALPHA"/>
    <property type="match status" value="1"/>
</dbReference>
<dbReference type="PANTHER" id="PTHR10169">
    <property type="entry name" value="DNA TOPOISOMERASE/GYRASE"/>
    <property type="match status" value="1"/>
</dbReference>
<dbReference type="Pfam" id="PF00204">
    <property type="entry name" value="DNA_gyraseB"/>
    <property type="match status" value="1"/>
</dbReference>
<dbReference type="Pfam" id="PF00521">
    <property type="entry name" value="DNA_topoisoIV"/>
    <property type="match status" value="1"/>
</dbReference>
<dbReference type="Pfam" id="PF08070">
    <property type="entry name" value="DTHCT"/>
    <property type="match status" value="1"/>
</dbReference>
<dbReference type="Pfam" id="PF02518">
    <property type="entry name" value="HATPase_c"/>
    <property type="match status" value="1"/>
</dbReference>
<dbReference type="Pfam" id="PF01751">
    <property type="entry name" value="Toprim"/>
    <property type="match status" value="1"/>
</dbReference>
<dbReference type="Pfam" id="PF16898">
    <property type="entry name" value="TOPRIM_C"/>
    <property type="match status" value="1"/>
</dbReference>
<dbReference type="PRINTS" id="PR01158">
    <property type="entry name" value="TOPISMRASEII"/>
</dbReference>
<dbReference type="PRINTS" id="PR00418">
    <property type="entry name" value="TPI2FAMILY"/>
</dbReference>
<dbReference type="SMART" id="SM00433">
    <property type="entry name" value="TOP2c"/>
    <property type="match status" value="1"/>
</dbReference>
<dbReference type="SMART" id="SM00434">
    <property type="entry name" value="TOP4c"/>
    <property type="match status" value="1"/>
</dbReference>
<dbReference type="SUPFAM" id="SSF55874">
    <property type="entry name" value="ATPase domain of HSP90 chaperone/DNA topoisomerase II/histidine kinase"/>
    <property type="match status" value="1"/>
</dbReference>
<dbReference type="SUPFAM" id="SSF54211">
    <property type="entry name" value="Ribosomal protein S5 domain 2-like"/>
    <property type="match status" value="1"/>
</dbReference>
<dbReference type="SUPFAM" id="SSF56719">
    <property type="entry name" value="Type II DNA topoisomerase"/>
    <property type="match status" value="1"/>
</dbReference>
<dbReference type="PROSITE" id="PS52040">
    <property type="entry name" value="TOPO_IIA"/>
    <property type="match status" value="1"/>
</dbReference>
<dbReference type="PROSITE" id="PS00177">
    <property type="entry name" value="TOPOISOMERASE_II"/>
    <property type="match status" value="1"/>
</dbReference>
<dbReference type="PROSITE" id="PS50880">
    <property type="entry name" value="TOPRIM"/>
    <property type="match status" value="1"/>
</dbReference>
<protein>
    <recommendedName>
        <fullName>DNA topoisomerase 2-alpha</fullName>
        <ecNumber evidence="5 8">5.6.2.2</ecNumber>
    </recommendedName>
    <alternativeName>
        <fullName>DNA topoisomerase II, alpha isozyme</fullName>
    </alternativeName>
</protein>
<evidence type="ECO:0000250" key="1">
    <source>
        <dbReference type="UniProtKB" id="P06786"/>
    </source>
</evidence>
<evidence type="ECO:0000250" key="2">
    <source>
        <dbReference type="UniProtKB" id="P11388"/>
    </source>
</evidence>
<evidence type="ECO:0000250" key="3">
    <source>
        <dbReference type="UniProtKB" id="P41516"/>
    </source>
</evidence>
<evidence type="ECO:0000250" key="4">
    <source>
        <dbReference type="UniProtKB" id="Q01320"/>
    </source>
</evidence>
<evidence type="ECO:0000255" key="5">
    <source>
        <dbReference type="PROSITE-ProRule" id="PRU00995"/>
    </source>
</evidence>
<evidence type="ECO:0000255" key="6">
    <source>
        <dbReference type="PROSITE-ProRule" id="PRU01384"/>
    </source>
</evidence>
<evidence type="ECO:0000256" key="7">
    <source>
        <dbReference type="SAM" id="MobiDB-lite"/>
    </source>
</evidence>
<evidence type="ECO:0000269" key="8">
    <source>
    </source>
</evidence>
<evidence type="ECO:0000305" key="9"/>